<dbReference type="EC" id="2.4.1.132" evidence="1"/>
<dbReference type="EC" id="2.4.1.257" evidence="1"/>
<dbReference type="EMBL" id="CR382135">
    <property type="protein sequence ID" value="CAG85910.2"/>
    <property type="molecule type" value="Genomic_DNA"/>
</dbReference>
<dbReference type="RefSeq" id="XP_457865.2">
    <property type="nucleotide sequence ID" value="XM_457865.1"/>
</dbReference>
<dbReference type="SMR" id="Q6BVA4"/>
<dbReference type="FunCoup" id="Q6BVA4">
    <property type="interactions" value="753"/>
</dbReference>
<dbReference type="STRING" id="284592.Q6BVA4"/>
<dbReference type="CAZy" id="GT4">
    <property type="family name" value="Glycosyltransferase Family 4"/>
</dbReference>
<dbReference type="GlyCosmos" id="Q6BVA4">
    <property type="glycosylation" value="2 sites, No reported glycans"/>
</dbReference>
<dbReference type="GeneID" id="2900691"/>
<dbReference type="KEGG" id="dha:DEHA2C04158g"/>
<dbReference type="VEuPathDB" id="FungiDB:DEHA2C04158g"/>
<dbReference type="eggNOG" id="KOG0853">
    <property type="taxonomic scope" value="Eukaryota"/>
</dbReference>
<dbReference type="HOGENOM" id="CLU_030619_1_0_1"/>
<dbReference type="InParanoid" id="Q6BVA4"/>
<dbReference type="OMA" id="AMYMKCP"/>
<dbReference type="OrthoDB" id="448893at2759"/>
<dbReference type="UniPathway" id="UPA00378"/>
<dbReference type="Proteomes" id="UP000000599">
    <property type="component" value="Chromosome C"/>
</dbReference>
<dbReference type="GO" id="GO:0005789">
    <property type="term" value="C:endoplasmic reticulum membrane"/>
    <property type="evidence" value="ECO:0007669"/>
    <property type="project" value="UniProtKB-SubCell"/>
</dbReference>
<dbReference type="GO" id="GO:0004378">
    <property type="term" value="F:GDP-Man:Man1GlcNAc2-PP-Dol alpha-1,3-mannosyltransferase activity"/>
    <property type="evidence" value="ECO:0007669"/>
    <property type="project" value="UniProtKB-EC"/>
</dbReference>
<dbReference type="GO" id="GO:0102704">
    <property type="term" value="F:GDP-Man:Man2GlcNAc2-PP-dolichol alpha-1,6-mannosyltransferase activity"/>
    <property type="evidence" value="ECO:0007669"/>
    <property type="project" value="UniProtKB-EC"/>
</dbReference>
<dbReference type="GO" id="GO:0006488">
    <property type="term" value="P:dolichol-linked oligosaccharide biosynthetic process"/>
    <property type="evidence" value="ECO:0007669"/>
    <property type="project" value="EnsemblFungi"/>
</dbReference>
<dbReference type="CDD" id="cd03805">
    <property type="entry name" value="GT4_ALG2-like"/>
    <property type="match status" value="1"/>
</dbReference>
<dbReference type="Gene3D" id="3.40.50.2000">
    <property type="entry name" value="Glycogen Phosphorylase B"/>
    <property type="match status" value="2"/>
</dbReference>
<dbReference type="InterPro" id="IPR027054">
    <property type="entry name" value="ALG2"/>
</dbReference>
<dbReference type="InterPro" id="IPR001296">
    <property type="entry name" value="Glyco_trans_1"/>
</dbReference>
<dbReference type="InterPro" id="IPR028098">
    <property type="entry name" value="Glyco_trans_4-like_N"/>
</dbReference>
<dbReference type="PANTHER" id="PTHR45918">
    <property type="entry name" value="ALPHA-1,3/1,6-MANNOSYLTRANSFERASE ALG2"/>
    <property type="match status" value="1"/>
</dbReference>
<dbReference type="PANTHER" id="PTHR45918:SF1">
    <property type="entry name" value="ALPHA-1,3_1,6-MANNOSYLTRANSFERASE ALG2"/>
    <property type="match status" value="1"/>
</dbReference>
<dbReference type="Pfam" id="PF13439">
    <property type="entry name" value="Glyco_transf_4"/>
    <property type="match status" value="1"/>
</dbReference>
<dbReference type="Pfam" id="PF00534">
    <property type="entry name" value="Glycos_transf_1"/>
    <property type="match status" value="1"/>
</dbReference>
<dbReference type="SUPFAM" id="SSF53756">
    <property type="entry name" value="UDP-Glycosyltransferase/glycogen phosphorylase"/>
    <property type="match status" value="1"/>
</dbReference>
<sequence length="476" mass="54443">MSKKLGNNSKKIAFVHPDLGIGGAERLVVDAAVGLQELENEVTIYTSHCDKKHCFEEVSSNLLDVEVYGDFFPTNVLKRFHILFAIIRQFYLVLALIFTGKIKQYDYFIVDQLSFCIPLLCCFSRPECKILFYCHFPDQLLALKGGFLKRFYRMPFDLIEEWTTGISDQIVVNSKFTKGIFHKTFKGLKNIEPGVIYPCVDLNSATDTEEDKLMDEEVNEFFKGGKFFLSVNRFERKKNIGLAIQSFAKFKAQLPKNVSEDNRIKPRLVVAGGFDPRVLENVEYLQELNGLSESLNLKCFTIRGKLLIIPPATDILFLPSIKSSLKKSLIKNAELLLYTPSFEHFGIVPVESMLFKTPVLSANNGGPLESIVHFTSDNIATATGYSQEPNDELWSKTMHTFYTELDEATKLKLGENGLTRVHELFSRHQMSEAFMQNLIQSNSKDEEKGILYGILKMWRIELLFVLISYYLVRLYK</sequence>
<evidence type="ECO:0000250" key="1">
    <source>
        <dbReference type="UniProtKB" id="P43636"/>
    </source>
</evidence>
<evidence type="ECO:0000255" key="2"/>
<evidence type="ECO:0000305" key="3"/>
<comment type="function">
    <text evidence="1">Mannosylates Man(2)GlcNAc(2)-dolichol diphosphate and Man(1)GlcNAc(2)-dolichol diphosphate to form Man(3)GlcNAc(2)-dolichol diphosphate.</text>
</comment>
<comment type="catalytic activity">
    <reaction evidence="1">
        <text>a beta-D-Man-(1-&gt;4)-beta-D-GlcNAc-(1-&gt;4)-alpha-D-GlcNAc-diphospho-di-trans,poly-cis-dolichol + GDP-alpha-D-mannose = an alpha-D-Man-(1-&gt;3)-beta-D-Man-(1-&gt;4)-beta-D-GlcNAc-(1-&gt;4)-alpha-D-GlcNAc-diphospho-di-trans,poly-cis-dolichol + GDP + H(+)</text>
        <dbReference type="Rhea" id="RHEA:29515"/>
        <dbReference type="Rhea" id="RHEA-COMP:19511"/>
        <dbReference type="Rhea" id="RHEA-COMP:19513"/>
        <dbReference type="ChEBI" id="CHEBI:15378"/>
        <dbReference type="ChEBI" id="CHEBI:57527"/>
        <dbReference type="ChEBI" id="CHEBI:58189"/>
        <dbReference type="ChEBI" id="CHEBI:58472"/>
        <dbReference type="ChEBI" id="CHEBI:132510"/>
        <dbReference type="EC" id="2.4.1.132"/>
    </reaction>
    <physiologicalReaction direction="left-to-right" evidence="1">
        <dbReference type="Rhea" id="RHEA:29516"/>
    </physiologicalReaction>
</comment>
<comment type="catalytic activity">
    <reaction evidence="1">
        <text>an alpha-D-Man-(1-&gt;3)-beta-D-Man-(1-&gt;4)-beta-D-GlcNAc-(1-&gt;4)-alpha-D-GlcNAc-diphospho-di-trans,poly-cis-dolichol + GDP-alpha-D-mannose = an alpha-D-Man-(1-&gt;3)-[alpha-D-Man-(1-&gt;6)]-beta-D-Man-(1-&gt;4)-beta-D-GlcNAc-(1-&gt;4)-alpha-D-GlcNAc-diphospho-di-trans,poly-cis-dolichol + GDP + H(+)</text>
        <dbReference type="Rhea" id="RHEA:29519"/>
        <dbReference type="Rhea" id="RHEA-COMP:19513"/>
        <dbReference type="Rhea" id="RHEA-COMP:19515"/>
        <dbReference type="ChEBI" id="CHEBI:15378"/>
        <dbReference type="ChEBI" id="CHEBI:57527"/>
        <dbReference type="ChEBI" id="CHEBI:58189"/>
        <dbReference type="ChEBI" id="CHEBI:132510"/>
        <dbReference type="ChEBI" id="CHEBI:132511"/>
        <dbReference type="EC" id="2.4.1.257"/>
    </reaction>
    <physiologicalReaction direction="left-to-right" evidence="1">
        <dbReference type="Rhea" id="RHEA:29520"/>
    </physiologicalReaction>
</comment>
<comment type="pathway">
    <text evidence="1">Protein modification; protein glycosylation.</text>
</comment>
<comment type="subcellular location">
    <subcellularLocation>
        <location evidence="1">Endoplasmic reticulum membrane</location>
        <topology evidence="2">Multi-pass membrane protein</topology>
    </subcellularLocation>
</comment>
<comment type="similarity">
    <text evidence="3">Belongs to the glycosyltransferase group 1 family.</text>
</comment>
<gene>
    <name type="primary">ALG2</name>
    <name type="ordered locus">DEHA2C04158g</name>
</gene>
<reference key="1">
    <citation type="journal article" date="2004" name="Nature">
        <title>Genome evolution in yeasts.</title>
        <authorList>
            <person name="Dujon B."/>
            <person name="Sherman D."/>
            <person name="Fischer G."/>
            <person name="Durrens P."/>
            <person name="Casaregola S."/>
            <person name="Lafontaine I."/>
            <person name="de Montigny J."/>
            <person name="Marck C."/>
            <person name="Neuveglise C."/>
            <person name="Talla E."/>
            <person name="Goffard N."/>
            <person name="Frangeul L."/>
            <person name="Aigle M."/>
            <person name="Anthouard V."/>
            <person name="Babour A."/>
            <person name="Barbe V."/>
            <person name="Barnay S."/>
            <person name="Blanchin S."/>
            <person name="Beckerich J.-M."/>
            <person name="Beyne E."/>
            <person name="Bleykasten C."/>
            <person name="Boisrame A."/>
            <person name="Boyer J."/>
            <person name="Cattolico L."/>
            <person name="Confanioleri F."/>
            <person name="de Daruvar A."/>
            <person name="Despons L."/>
            <person name="Fabre E."/>
            <person name="Fairhead C."/>
            <person name="Ferry-Dumazet H."/>
            <person name="Groppi A."/>
            <person name="Hantraye F."/>
            <person name="Hennequin C."/>
            <person name="Jauniaux N."/>
            <person name="Joyet P."/>
            <person name="Kachouri R."/>
            <person name="Kerrest A."/>
            <person name="Koszul R."/>
            <person name="Lemaire M."/>
            <person name="Lesur I."/>
            <person name="Ma L."/>
            <person name="Muller H."/>
            <person name="Nicaud J.-M."/>
            <person name="Nikolski M."/>
            <person name="Oztas S."/>
            <person name="Ozier-Kalogeropoulos O."/>
            <person name="Pellenz S."/>
            <person name="Potier S."/>
            <person name="Richard G.-F."/>
            <person name="Straub M.-L."/>
            <person name="Suleau A."/>
            <person name="Swennen D."/>
            <person name="Tekaia F."/>
            <person name="Wesolowski-Louvel M."/>
            <person name="Westhof E."/>
            <person name="Wirth B."/>
            <person name="Zeniou-Meyer M."/>
            <person name="Zivanovic Y."/>
            <person name="Bolotin-Fukuhara M."/>
            <person name="Thierry A."/>
            <person name="Bouchier C."/>
            <person name="Caudron B."/>
            <person name="Scarpelli C."/>
            <person name="Gaillardin C."/>
            <person name="Weissenbach J."/>
            <person name="Wincker P."/>
            <person name="Souciet J.-L."/>
        </authorList>
    </citation>
    <scope>NUCLEOTIDE SEQUENCE [LARGE SCALE GENOMIC DNA]</scope>
    <source>
        <strain>ATCC 36239 / CBS 767 / BCRC 21394 / JCM 1990 / NBRC 0083 / IGC 2968</strain>
    </source>
</reference>
<accession>Q6BVA4</accession>
<feature type="chain" id="PRO_0000080265" description="Alpha-1,3/1,6-mannosyltransferase ALG2">
    <location>
        <begin position="1"/>
        <end position="476"/>
    </location>
</feature>
<feature type="transmembrane region" description="Helical" evidence="2">
    <location>
        <begin position="80"/>
        <end position="100"/>
    </location>
</feature>
<feature type="transmembrane region" description="Helical" evidence="2">
    <location>
        <begin position="449"/>
        <end position="469"/>
    </location>
</feature>
<feature type="glycosylation site" description="N-linked (GlcNAc...) asparagine" evidence="2">
    <location>
        <position position="7"/>
    </location>
</feature>
<feature type="glycosylation site" description="N-linked (GlcNAc...) asparagine" evidence="2">
    <location>
        <position position="257"/>
    </location>
</feature>
<organism>
    <name type="scientific">Debaryomyces hansenii (strain ATCC 36239 / CBS 767 / BCRC 21394 / JCM 1990 / NBRC 0083 / IGC 2968)</name>
    <name type="common">Yeast</name>
    <name type="synonym">Torulaspora hansenii</name>
    <dbReference type="NCBI Taxonomy" id="284592"/>
    <lineage>
        <taxon>Eukaryota</taxon>
        <taxon>Fungi</taxon>
        <taxon>Dikarya</taxon>
        <taxon>Ascomycota</taxon>
        <taxon>Saccharomycotina</taxon>
        <taxon>Pichiomycetes</taxon>
        <taxon>Debaryomycetaceae</taxon>
        <taxon>Debaryomyces</taxon>
    </lineage>
</organism>
<name>ALG2_DEBHA</name>
<protein>
    <recommendedName>
        <fullName>Alpha-1,3/1,6-mannosyltransferase ALG2</fullName>
        <ecNumber evidence="1">2.4.1.132</ecNumber>
        <ecNumber evidence="1">2.4.1.257</ecNumber>
    </recommendedName>
    <alternativeName>
        <fullName>Asparagine-linked glycosylation protein 2</fullName>
    </alternativeName>
    <alternativeName>
        <fullName>GDP-Man:Man(1)GlcNAc(2)-PP-Dol alpha-1,3-mannosyltransferase</fullName>
    </alternativeName>
    <alternativeName>
        <fullName>GDP-Man:Man(1)GlcNAc(2)-PP-dolichol mannosyltransferase</fullName>
    </alternativeName>
    <alternativeName>
        <fullName>GDP-Man:Man(2)GlcNAc(2)-PP-Dol alpha-1,6-mannosyltransferase</fullName>
    </alternativeName>
</protein>
<keyword id="KW-0256">Endoplasmic reticulum</keyword>
<keyword id="KW-0325">Glycoprotein</keyword>
<keyword id="KW-0328">Glycosyltransferase</keyword>
<keyword id="KW-0472">Membrane</keyword>
<keyword id="KW-1185">Reference proteome</keyword>
<keyword id="KW-0808">Transferase</keyword>
<keyword id="KW-0812">Transmembrane</keyword>
<keyword id="KW-1133">Transmembrane helix</keyword>
<proteinExistence type="inferred from homology"/>